<dbReference type="EMBL" id="BX571857">
    <property type="protein sequence ID" value="CAG42499.1"/>
    <property type="molecule type" value="Genomic_DNA"/>
</dbReference>
<dbReference type="SMR" id="Q6GB72"/>
<dbReference type="KEGG" id="sas:SAS0723"/>
<dbReference type="HOGENOM" id="CLU_009621_2_1_9"/>
<dbReference type="GO" id="GO:0005737">
    <property type="term" value="C:cytoplasm"/>
    <property type="evidence" value="ECO:0007669"/>
    <property type="project" value="UniProtKB-SubCell"/>
</dbReference>
<dbReference type="GO" id="GO:0009380">
    <property type="term" value="C:excinuclease repair complex"/>
    <property type="evidence" value="ECO:0007669"/>
    <property type="project" value="InterPro"/>
</dbReference>
<dbReference type="GO" id="GO:0005524">
    <property type="term" value="F:ATP binding"/>
    <property type="evidence" value="ECO:0007669"/>
    <property type="project" value="UniProtKB-UniRule"/>
</dbReference>
<dbReference type="GO" id="GO:0016887">
    <property type="term" value="F:ATP hydrolysis activity"/>
    <property type="evidence" value="ECO:0007669"/>
    <property type="project" value="InterPro"/>
</dbReference>
<dbReference type="GO" id="GO:0003677">
    <property type="term" value="F:DNA binding"/>
    <property type="evidence" value="ECO:0007669"/>
    <property type="project" value="UniProtKB-UniRule"/>
</dbReference>
<dbReference type="GO" id="GO:0009381">
    <property type="term" value="F:excinuclease ABC activity"/>
    <property type="evidence" value="ECO:0007669"/>
    <property type="project" value="UniProtKB-UniRule"/>
</dbReference>
<dbReference type="GO" id="GO:0006289">
    <property type="term" value="P:nucleotide-excision repair"/>
    <property type="evidence" value="ECO:0007669"/>
    <property type="project" value="UniProtKB-UniRule"/>
</dbReference>
<dbReference type="GO" id="GO:0009432">
    <property type="term" value="P:SOS response"/>
    <property type="evidence" value="ECO:0007669"/>
    <property type="project" value="UniProtKB-UniRule"/>
</dbReference>
<dbReference type="CDD" id="cd17916">
    <property type="entry name" value="DEXHc_UvrB"/>
    <property type="match status" value="1"/>
</dbReference>
<dbReference type="CDD" id="cd18790">
    <property type="entry name" value="SF2_C_UvrB"/>
    <property type="match status" value="1"/>
</dbReference>
<dbReference type="Gene3D" id="3.40.50.300">
    <property type="entry name" value="P-loop containing nucleotide triphosphate hydrolases"/>
    <property type="match status" value="3"/>
</dbReference>
<dbReference type="Gene3D" id="4.10.860.10">
    <property type="entry name" value="UVR domain"/>
    <property type="match status" value="1"/>
</dbReference>
<dbReference type="HAMAP" id="MF_00204">
    <property type="entry name" value="UvrB"/>
    <property type="match status" value="1"/>
</dbReference>
<dbReference type="InterPro" id="IPR006935">
    <property type="entry name" value="Helicase/UvrB_N"/>
</dbReference>
<dbReference type="InterPro" id="IPR014001">
    <property type="entry name" value="Helicase_ATP-bd"/>
</dbReference>
<dbReference type="InterPro" id="IPR001650">
    <property type="entry name" value="Helicase_C-like"/>
</dbReference>
<dbReference type="InterPro" id="IPR027417">
    <property type="entry name" value="P-loop_NTPase"/>
</dbReference>
<dbReference type="InterPro" id="IPR001943">
    <property type="entry name" value="UVR_dom"/>
</dbReference>
<dbReference type="InterPro" id="IPR036876">
    <property type="entry name" value="UVR_dom_sf"/>
</dbReference>
<dbReference type="InterPro" id="IPR004807">
    <property type="entry name" value="UvrB"/>
</dbReference>
<dbReference type="InterPro" id="IPR041471">
    <property type="entry name" value="UvrB_inter"/>
</dbReference>
<dbReference type="InterPro" id="IPR024759">
    <property type="entry name" value="UvrB_YAD/RRR_dom"/>
</dbReference>
<dbReference type="NCBIfam" id="NF003673">
    <property type="entry name" value="PRK05298.1"/>
    <property type="match status" value="1"/>
</dbReference>
<dbReference type="NCBIfam" id="TIGR00631">
    <property type="entry name" value="uvrb"/>
    <property type="match status" value="1"/>
</dbReference>
<dbReference type="PANTHER" id="PTHR24029">
    <property type="entry name" value="UVRABC SYSTEM PROTEIN B"/>
    <property type="match status" value="1"/>
</dbReference>
<dbReference type="PANTHER" id="PTHR24029:SF0">
    <property type="entry name" value="UVRABC SYSTEM PROTEIN B"/>
    <property type="match status" value="1"/>
</dbReference>
<dbReference type="Pfam" id="PF00271">
    <property type="entry name" value="Helicase_C"/>
    <property type="match status" value="1"/>
</dbReference>
<dbReference type="Pfam" id="PF04851">
    <property type="entry name" value="ResIII"/>
    <property type="match status" value="1"/>
</dbReference>
<dbReference type="Pfam" id="PF02151">
    <property type="entry name" value="UVR"/>
    <property type="match status" value="1"/>
</dbReference>
<dbReference type="Pfam" id="PF12344">
    <property type="entry name" value="UvrB"/>
    <property type="match status" value="1"/>
</dbReference>
<dbReference type="Pfam" id="PF17757">
    <property type="entry name" value="UvrB_inter"/>
    <property type="match status" value="1"/>
</dbReference>
<dbReference type="SMART" id="SM00487">
    <property type="entry name" value="DEXDc"/>
    <property type="match status" value="1"/>
</dbReference>
<dbReference type="SMART" id="SM00490">
    <property type="entry name" value="HELICc"/>
    <property type="match status" value="1"/>
</dbReference>
<dbReference type="SUPFAM" id="SSF46600">
    <property type="entry name" value="C-terminal UvrC-binding domain of UvrB"/>
    <property type="match status" value="1"/>
</dbReference>
<dbReference type="SUPFAM" id="SSF52540">
    <property type="entry name" value="P-loop containing nucleoside triphosphate hydrolases"/>
    <property type="match status" value="2"/>
</dbReference>
<dbReference type="PROSITE" id="PS51192">
    <property type="entry name" value="HELICASE_ATP_BIND_1"/>
    <property type="match status" value="1"/>
</dbReference>
<dbReference type="PROSITE" id="PS51194">
    <property type="entry name" value="HELICASE_CTER"/>
    <property type="match status" value="1"/>
</dbReference>
<dbReference type="PROSITE" id="PS50151">
    <property type="entry name" value="UVR"/>
    <property type="match status" value="1"/>
</dbReference>
<feature type="chain" id="PRO_0000138428" description="UvrABC system protein B">
    <location>
        <begin position="1"/>
        <end position="663"/>
    </location>
</feature>
<feature type="domain" description="Helicase ATP-binding" evidence="1">
    <location>
        <begin position="30"/>
        <end position="414"/>
    </location>
</feature>
<feature type="domain" description="Helicase C-terminal" evidence="1">
    <location>
        <begin position="434"/>
        <end position="600"/>
    </location>
</feature>
<feature type="domain" description="UVR" evidence="1">
    <location>
        <begin position="627"/>
        <end position="662"/>
    </location>
</feature>
<feature type="short sequence motif" description="Beta-hairpin">
    <location>
        <begin position="96"/>
        <end position="119"/>
    </location>
</feature>
<feature type="binding site" evidence="1">
    <location>
        <begin position="43"/>
        <end position="50"/>
    </location>
    <ligand>
        <name>ATP</name>
        <dbReference type="ChEBI" id="CHEBI:30616"/>
    </ligand>
</feature>
<protein>
    <recommendedName>
        <fullName evidence="1">UvrABC system protein B</fullName>
        <shortName evidence="1">Protein UvrB</shortName>
    </recommendedName>
    <alternativeName>
        <fullName evidence="1">Excinuclease ABC subunit B</fullName>
    </alternativeName>
</protein>
<evidence type="ECO:0000255" key="1">
    <source>
        <dbReference type="HAMAP-Rule" id="MF_00204"/>
    </source>
</evidence>
<name>UVRB_STAAS</name>
<reference key="1">
    <citation type="journal article" date="2004" name="Proc. Natl. Acad. Sci. U.S.A.">
        <title>Complete genomes of two clinical Staphylococcus aureus strains: evidence for the rapid evolution of virulence and drug resistance.</title>
        <authorList>
            <person name="Holden M.T.G."/>
            <person name="Feil E.J."/>
            <person name="Lindsay J.A."/>
            <person name="Peacock S.J."/>
            <person name="Day N.P.J."/>
            <person name="Enright M.C."/>
            <person name="Foster T.J."/>
            <person name="Moore C.E."/>
            <person name="Hurst L."/>
            <person name="Atkin R."/>
            <person name="Barron A."/>
            <person name="Bason N."/>
            <person name="Bentley S.D."/>
            <person name="Chillingworth C."/>
            <person name="Chillingworth T."/>
            <person name="Churcher C."/>
            <person name="Clark L."/>
            <person name="Corton C."/>
            <person name="Cronin A."/>
            <person name="Doggett J."/>
            <person name="Dowd L."/>
            <person name="Feltwell T."/>
            <person name="Hance Z."/>
            <person name="Harris B."/>
            <person name="Hauser H."/>
            <person name="Holroyd S."/>
            <person name="Jagels K."/>
            <person name="James K.D."/>
            <person name="Lennard N."/>
            <person name="Line A."/>
            <person name="Mayes R."/>
            <person name="Moule S."/>
            <person name="Mungall K."/>
            <person name="Ormond D."/>
            <person name="Quail M.A."/>
            <person name="Rabbinowitsch E."/>
            <person name="Rutherford K.M."/>
            <person name="Sanders M."/>
            <person name="Sharp S."/>
            <person name="Simmonds M."/>
            <person name="Stevens K."/>
            <person name="Whitehead S."/>
            <person name="Barrell B.G."/>
            <person name="Spratt B.G."/>
            <person name="Parkhill J."/>
        </authorList>
    </citation>
    <scope>NUCLEOTIDE SEQUENCE [LARGE SCALE GENOMIC DNA]</scope>
    <source>
        <strain>MSSA476</strain>
    </source>
</reference>
<gene>
    <name evidence="1" type="primary">uvrB</name>
    <name type="ordered locus">SAS0723</name>
</gene>
<organism>
    <name type="scientific">Staphylococcus aureus (strain MSSA476)</name>
    <dbReference type="NCBI Taxonomy" id="282459"/>
    <lineage>
        <taxon>Bacteria</taxon>
        <taxon>Bacillati</taxon>
        <taxon>Bacillota</taxon>
        <taxon>Bacilli</taxon>
        <taxon>Bacillales</taxon>
        <taxon>Staphylococcaceae</taxon>
        <taxon>Staphylococcus</taxon>
    </lineage>
</organism>
<proteinExistence type="inferred from homology"/>
<accession>Q6GB72</accession>
<comment type="function">
    <text evidence="1">The UvrABC repair system catalyzes the recognition and processing of DNA lesions. A damage recognition complex composed of 2 UvrA and 2 UvrB subunits scans DNA for abnormalities. Upon binding of the UvrA(2)B(2) complex to a putative damaged site, the DNA wraps around one UvrB monomer. DNA wrap is dependent on ATP binding by UvrB and probably causes local melting of the DNA helix, facilitating insertion of UvrB beta-hairpin between the DNA strands. Then UvrB probes one DNA strand for the presence of a lesion. If a lesion is found the UvrA subunits dissociate and the UvrB-DNA preincision complex is formed. This complex is subsequently bound by UvrC and the second UvrB is released. If no lesion is found, the DNA wraps around the other UvrB subunit that will check the other stand for damage.</text>
</comment>
<comment type="subunit">
    <text evidence="1">Forms a heterotetramer with UvrA during the search for lesions. Interacts with UvrC in an incision complex.</text>
</comment>
<comment type="subcellular location">
    <subcellularLocation>
        <location evidence="1">Cytoplasm</location>
    </subcellularLocation>
</comment>
<comment type="domain">
    <text evidence="1">The beta-hairpin motif is involved in DNA binding.</text>
</comment>
<comment type="similarity">
    <text evidence="1">Belongs to the UvrB family.</text>
</comment>
<keyword id="KW-0067">ATP-binding</keyword>
<keyword id="KW-0963">Cytoplasm</keyword>
<keyword id="KW-0227">DNA damage</keyword>
<keyword id="KW-0228">DNA excision</keyword>
<keyword id="KW-0234">DNA repair</keyword>
<keyword id="KW-0267">Excision nuclease</keyword>
<keyword id="KW-0547">Nucleotide-binding</keyword>
<keyword id="KW-0742">SOS response</keyword>
<sequence length="663" mass="76882">MTMVEHYPFKIHSDFEPQGDQPQAIEEIVEGIKAGKRHQTLLGATGTGKTFTMSNVIKEVGKPTLIIAHNKTLAGQLYSEFKEFFPENRVEYFVSYYDYYQPEAYVPSTDTFIEKDASINDEIDQLRHSATSALFERDDVIIIASVSCIYGLGNPEEYKDLVVSVRVGMEMDRSELLRKLVDVQYTRNDIDFQRGTFRVRGDVVEIFPASKEELCIRVEFFGDEIDRIREVNYLTGEVLKEREHFAIFPASHFVTREEKLKVAIERIEKELEERLKELRDENKLLEAQRLEQRTNYDLEMMREMGFCSGIENYSVHLTLRPLGSTPYTLLDYFGDDWLVMIDESHVTLPQVRGMYNGDRARKQVLVDHGFRLPSALDNRPLKFEEFEEKTKQLVYVSATPGPYEIEHTDKMVEQIIRPTGLLDPKIEVRPTENQIDDLLSEIQTRVERNERVLVTTLTKKMSEDLTTYMKEAGIKVNYLHSEIKTLERIEIIRDLRMGTYDVIVGINLLREGIDIPEVSLVVILDADKEGFLRSNRSLIQTIGRAARNDKGEVIMYADKMTDSMKYAIDETQRRREIQMKHNEKHGITPKTINKKIHDLISATVENDENNDKAQTVIPKKMTKKERQKTIDNIEKEMKQAAKDLDFEKATELRDMLFELKAEG</sequence>